<sequence length="185" mass="20792">MKTAQELRVGNVVMIGNDAWVVSKTEYNKSGRNAAVVKMKLKNLLNGGGQESVYKADDKFEVVVLDRKEVTYSYFADPMYVFMDADYNQYEVEAEMMGDALNYLEDGMACEVVFYNEKAISVELPTILVREITYTEPAVKGDTSSGKVLKNAKLATGFELQVPLFCNTGDKIEIDTRTNEYRSRA</sequence>
<evidence type="ECO:0000255" key="1">
    <source>
        <dbReference type="HAMAP-Rule" id="MF_00141"/>
    </source>
</evidence>
<dbReference type="EMBL" id="CP000546">
    <property type="protein sequence ID" value="ABN01244.1"/>
    <property type="molecule type" value="Genomic_DNA"/>
</dbReference>
<dbReference type="RefSeq" id="WP_004193484.1">
    <property type="nucleotide sequence ID" value="NC_008836.1"/>
</dbReference>
<dbReference type="SMR" id="A2SA02"/>
<dbReference type="GeneID" id="93061002"/>
<dbReference type="KEGG" id="bml:BMA10229_A2822"/>
<dbReference type="HOGENOM" id="CLU_074944_2_1_4"/>
<dbReference type="UniPathway" id="UPA00345"/>
<dbReference type="Proteomes" id="UP000002283">
    <property type="component" value="Chromosome I"/>
</dbReference>
<dbReference type="GO" id="GO:0005737">
    <property type="term" value="C:cytoplasm"/>
    <property type="evidence" value="ECO:0007669"/>
    <property type="project" value="UniProtKB-SubCell"/>
</dbReference>
<dbReference type="GO" id="GO:0003746">
    <property type="term" value="F:translation elongation factor activity"/>
    <property type="evidence" value="ECO:0007669"/>
    <property type="project" value="UniProtKB-UniRule"/>
</dbReference>
<dbReference type="GO" id="GO:0043043">
    <property type="term" value="P:peptide biosynthetic process"/>
    <property type="evidence" value="ECO:0007669"/>
    <property type="project" value="InterPro"/>
</dbReference>
<dbReference type="CDD" id="cd04470">
    <property type="entry name" value="S1_EF-P_repeat_1"/>
    <property type="match status" value="1"/>
</dbReference>
<dbReference type="CDD" id="cd05794">
    <property type="entry name" value="S1_EF-P_repeat_2"/>
    <property type="match status" value="1"/>
</dbReference>
<dbReference type="FunFam" id="2.30.30.30:FF:000003">
    <property type="entry name" value="Elongation factor P"/>
    <property type="match status" value="1"/>
</dbReference>
<dbReference type="FunFam" id="2.40.50.140:FF:000004">
    <property type="entry name" value="Elongation factor P"/>
    <property type="match status" value="1"/>
</dbReference>
<dbReference type="FunFam" id="2.40.50.140:FF:000009">
    <property type="entry name" value="Elongation factor P"/>
    <property type="match status" value="1"/>
</dbReference>
<dbReference type="Gene3D" id="2.30.30.30">
    <property type="match status" value="1"/>
</dbReference>
<dbReference type="Gene3D" id="2.40.50.140">
    <property type="entry name" value="Nucleic acid-binding proteins"/>
    <property type="match status" value="2"/>
</dbReference>
<dbReference type="HAMAP" id="MF_00141">
    <property type="entry name" value="EF_P"/>
    <property type="match status" value="1"/>
</dbReference>
<dbReference type="InterPro" id="IPR015365">
    <property type="entry name" value="Elong-fact-P_C"/>
</dbReference>
<dbReference type="InterPro" id="IPR012340">
    <property type="entry name" value="NA-bd_OB-fold"/>
</dbReference>
<dbReference type="InterPro" id="IPR014722">
    <property type="entry name" value="Rib_uL2_dom2"/>
</dbReference>
<dbReference type="InterPro" id="IPR020599">
    <property type="entry name" value="Transl_elong_fac_P/YeiP"/>
</dbReference>
<dbReference type="InterPro" id="IPR013185">
    <property type="entry name" value="Transl_elong_KOW-like"/>
</dbReference>
<dbReference type="InterPro" id="IPR001059">
    <property type="entry name" value="Transl_elong_P/YeiP_cen"/>
</dbReference>
<dbReference type="InterPro" id="IPR013852">
    <property type="entry name" value="Transl_elong_P/YeiP_CS"/>
</dbReference>
<dbReference type="InterPro" id="IPR011768">
    <property type="entry name" value="Transl_elongation_fac_P"/>
</dbReference>
<dbReference type="InterPro" id="IPR008991">
    <property type="entry name" value="Translation_prot_SH3-like_sf"/>
</dbReference>
<dbReference type="NCBIfam" id="TIGR00038">
    <property type="entry name" value="efp"/>
    <property type="match status" value="1"/>
</dbReference>
<dbReference type="NCBIfam" id="NF001810">
    <property type="entry name" value="PRK00529.1"/>
    <property type="match status" value="1"/>
</dbReference>
<dbReference type="PANTHER" id="PTHR30053">
    <property type="entry name" value="ELONGATION FACTOR P"/>
    <property type="match status" value="1"/>
</dbReference>
<dbReference type="PANTHER" id="PTHR30053:SF12">
    <property type="entry name" value="ELONGATION FACTOR P (EF-P) FAMILY PROTEIN"/>
    <property type="match status" value="1"/>
</dbReference>
<dbReference type="Pfam" id="PF01132">
    <property type="entry name" value="EFP"/>
    <property type="match status" value="1"/>
</dbReference>
<dbReference type="Pfam" id="PF08207">
    <property type="entry name" value="EFP_N"/>
    <property type="match status" value="1"/>
</dbReference>
<dbReference type="Pfam" id="PF09285">
    <property type="entry name" value="Elong-fact-P_C"/>
    <property type="match status" value="1"/>
</dbReference>
<dbReference type="PIRSF" id="PIRSF005901">
    <property type="entry name" value="EF-P"/>
    <property type="match status" value="1"/>
</dbReference>
<dbReference type="SMART" id="SM01185">
    <property type="entry name" value="EFP"/>
    <property type="match status" value="1"/>
</dbReference>
<dbReference type="SMART" id="SM00841">
    <property type="entry name" value="Elong-fact-P_C"/>
    <property type="match status" value="1"/>
</dbReference>
<dbReference type="SUPFAM" id="SSF50249">
    <property type="entry name" value="Nucleic acid-binding proteins"/>
    <property type="match status" value="2"/>
</dbReference>
<dbReference type="SUPFAM" id="SSF50104">
    <property type="entry name" value="Translation proteins SH3-like domain"/>
    <property type="match status" value="1"/>
</dbReference>
<dbReference type="PROSITE" id="PS01275">
    <property type="entry name" value="EFP"/>
    <property type="match status" value="1"/>
</dbReference>
<keyword id="KW-0963">Cytoplasm</keyword>
<keyword id="KW-0251">Elongation factor</keyword>
<keyword id="KW-0648">Protein biosynthesis</keyword>
<proteinExistence type="inferred from homology"/>
<reference key="1">
    <citation type="journal article" date="2010" name="Genome Biol. Evol.">
        <title>Continuing evolution of Burkholderia mallei through genome reduction and large-scale rearrangements.</title>
        <authorList>
            <person name="Losada L."/>
            <person name="Ronning C.M."/>
            <person name="DeShazer D."/>
            <person name="Woods D."/>
            <person name="Fedorova N."/>
            <person name="Kim H.S."/>
            <person name="Shabalina S.A."/>
            <person name="Pearson T.R."/>
            <person name="Brinkac L."/>
            <person name="Tan P."/>
            <person name="Nandi T."/>
            <person name="Crabtree J."/>
            <person name="Badger J."/>
            <person name="Beckstrom-Sternberg S."/>
            <person name="Saqib M."/>
            <person name="Schutzer S.E."/>
            <person name="Keim P."/>
            <person name="Nierman W.C."/>
        </authorList>
    </citation>
    <scope>NUCLEOTIDE SEQUENCE [LARGE SCALE GENOMIC DNA]</scope>
    <source>
        <strain>NCTC 10229</strain>
    </source>
</reference>
<gene>
    <name evidence="1" type="primary">efp</name>
    <name type="ordered locus">BMA10229_A2822</name>
</gene>
<comment type="function">
    <text evidence="1">Involved in peptide bond synthesis. Stimulates efficient translation and peptide-bond synthesis on native or reconstituted 70S ribosomes in vitro. Probably functions indirectly by altering the affinity of the ribosome for aminoacyl-tRNA, thus increasing their reactivity as acceptors for peptidyl transferase.</text>
</comment>
<comment type="pathway">
    <text evidence="1">Protein biosynthesis; polypeptide chain elongation.</text>
</comment>
<comment type="subcellular location">
    <subcellularLocation>
        <location evidence="1">Cytoplasm</location>
    </subcellularLocation>
</comment>
<comment type="similarity">
    <text evidence="1">Belongs to the elongation factor P family.</text>
</comment>
<accession>A2SA02</accession>
<name>EFP_BURM9</name>
<feature type="chain" id="PRO_1000010698" description="Elongation factor P">
    <location>
        <begin position="1"/>
        <end position="185"/>
    </location>
</feature>
<organism>
    <name type="scientific">Burkholderia mallei (strain NCTC 10229)</name>
    <dbReference type="NCBI Taxonomy" id="412022"/>
    <lineage>
        <taxon>Bacteria</taxon>
        <taxon>Pseudomonadati</taxon>
        <taxon>Pseudomonadota</taxon>
        <taxon>Betaproteobacteria</taxon>
        <taxon>Burkholderiales</taxon>
        <taxon>Burkholderiaceae</taxon>
        <taxon>Burkholderia</taxon>
        <taxon>pseudomallei group</taxon>
    </lineage>
</organism>
<protein>
    <recommendedName>
        <fullName evidence="1">Elongation factor P</fullName>
        <shortName evidence="1">EF-P</shortName>
    </recommendedName>
</protein>